<comment type="function">
    <text evidence="1 6 7 11">NADP-dependent, medium-chain alcohol dehydrogenase with a broad substrate specificity (PubMed:11742541). Aldehydes exhibited 50-12000 times higher catalytic efficiency than the corresponding alcohols, therefore the major function of the enzyme is as an aldehyde reductase (PubMed:11742541). The enzyme is active towards aromatic and aliphatic (linear and branched-chain) aldehydes (PubMed:11742541). The enzyme is very active towards aromatic aldehydes, such as cinnamaldehyde, benzaldehyde and substituted benzaldehydes, such as veratraldehyde and panisaldehyde (PubMed:11742541). It exhibits low activity towards substituted cinnamaldehydes, such as coniferaldehyde and sinapaldehyde (PubMed:11742541). The enzyme has no activity with ketones, such as acetone or cyclohexanone (PubMed:11742541). For the reverse reaction, linear and branched-chain primary alcohols are substrates, whereas very low activity is found with secondary alcohols, such as butan-2-ol (PubMed:11742541). The enzyme may be physiologically involved in several steps of the lignin degradation pathway, initiated by other microorganisms, in the synthesis of fusel alcohols, products derived from the aminoacidic metabolism, and in the homeostasis of NADP(H) (PubMed:12604208). Has the ability to reduce 5-hydroxymethyl furfural (HMF), a furan derivative which is formed during the hydrolysis of lignocellulosic materials, to 5-hydroxymethylfurfuryl alcohol, thereby alleviating the inhibition of the fermentation of lignocellulose hydrolysates by HMF during fuel ethanol production (PubMed:16652391). Also acts as an inhibitor of protein S-nitrosylation by mediating degradation of S-nitroso-coenzyme A (S-nitroso-CoA), a cofactor required to S-nitrosylate proteins (PubMed:25512491).</text>
</comment>
<comment type="catalytic activity">
    <reaction evidence="1">
        <text>a primary alcohol + NADP(+) = an aldehyde + NADPH + H(+)</text>
        <dbReference type="Rhea" id="RHEA:15937"/>
        <dbReference type="ChEBI" id="CHEBI:15378"/>
        <dbReference type="ChEBI" id="CHEBI:15734"/>
        <dbReference type="ChEBI" id="CHEBI:17478"/>
        <dbReference type="ChEBI" id="CHEBI:57783"/>
        <dbReference type="ChEBI" id="CHEBI:58349"/>
        <dbReference type="EC" id="1.1.1.2"/>
    </reaction>
    <physiologicalReaction direction="left-to-right" evidence="1">
        <dbReference type="Rhea" id="RHEA:15938"/>
    </physiologicalReaction>
    <physiologicalReaction direction="right-to-left" evidence="1">
        <dbReference type="Rhea" id="RHEA:15939"/>
    </physiologicalReaction>
</comment>
<comment type="catalytic activity">
    <reaction evidence="1">
        <text>(E)-cinnamyl alcohol + NADP(+) = (E)-cinnamaldehyde + NADPH + H(+)</text>
        <dbReference type="Rhea" id="RHEA:10392"/>
        <dbReference type="ChEBI" id="CHEBI:15378"/>
        <dbReference type="ChEBI" id="CHEBI:16731"/>
        <dbReference type="ChEBI" id="CHEBI:33227"/>
        <dbReference type="ChEBI" id="CHEBI:57783"/>
        <dbReference type="ChEBI" id="CHEBI:58349"/>
    </reaction>
</comment>
<comment type="catalytic activity">
    <reaction evidence="1">
        <text>hexan-1-ol + NADP(+) = hexanal + NADPH + H(+)</text>
        <dbReference type="Rhea" id="RHEA:58404"/>
        <dbReference type="ChEBI" id="CHEBI:15378"/>
        <dbReference type="ChEBI" id="CHEBI:57783"/>
        <dbReference type="ChEBI" id="CHEBI:58349"/>
        <dbReference type="ChEBI" id="CHEBI:87393"/>
        <dbReference type="ChEBI" id="CHEBI:88528"/>
    </reaction>
</comment>
<comment type="catalytic activity">
    <reaction evidence="1">
        <text>3-methylbutanol + NADP(+) = 3-methylbutanal + NADPH + H(+)</text>
        <dbReference type="Rhea" id="RHEA:18525"/>
        <dbReference type="ChEBI" id="CHEBI:15378"/>
        <dbReference type="ChEBI" id="CHEBI:15837"/>
        <dbReference type="ChEBI" id="CHEBI:16638"/>
        <dbReference type="ChEBI" id="CHEBI:57783"/>
        <dbReference type="ChEBI" id="CHEBI:58349"/>
    </reaction>
</comment>
<comment type="catalytic activity">
    <reaction evidence="7">
        <text>S-nitroso-CoA + NADPH + H(+) = sulfinamide-CoA + NADP(+)</text>
        <dbReference type="Rhea" id="RHEA:78375"/>
        <dbReference type="ChEBI" id="CHEBI:15378"/>
        <dbReference type="ChEBI" id="CHEBI:57783"/>
        <dbReference type="ChEBI" id="CHEBI:58349"/>
        <dbReference type="ChEBI" id="CHEBI:145546"/>
        <dbReference type="ChEBI" id="CHEBI:145548"/>
    </reaction>
    <physiologicalReaction direction="left-to-right" evidence="7">
        <dbReference type="Rhea" id="RHEA:78376"/>
    </physiologicalReaction>
</comment>
<comment type="cofactor">
    <cofactor evidence="5">
        <name>Zn(2+)</name>
        <dbReference type="ChEBI" id="CHEBI:29105"/>
    </cofactor>
    <text evidence="5">Binds 2 Zn(2+) ions per subunit.</text>
</comment>
<comment type="biophysicochemical properties">
    <kinetics>
        <KM evidence="1">0.172 mM for cinnamaldehyde</KM>
        <KM evidence="1">0.073 mM for veratraldehyde</KM>
        <KM evidence="1">0.152 mM for hexanal</KM>
        <KM evidence="1">0.06 mM for pentanal</KM>
        <KM evidence="1">0.129 mM for 3-methylbutanal</KM>
        <KM evidence="1">0.029 mM for NADPH</KM>
        <KM evidence="1">0.436 mM for cinnamyl alcohol</KM>
        <KM evidence="1">9.1 mM for hexan-1-ol</KM>
        <KM evidence="2">10.5 mM for pentan-1-ol</KM>
        <KM evidence="1">0.061 mM for NADP(+)</KM>
        <KM evidence="7">180.5 uM for S-nitroso-CoA</KM>
        <text evidence="7">kcat is 2.59 min(-1) for S-nitroso-CoA as substrate (PubMed:25512491).</text>
    </kinetics>
    <phDependence>
        <text evidence="2">Optimum pH is 7 for the reduction reaction and 10 for the oxidation reaction.</text>
    </phDependence>
</comment>
<comment type="subunit">
    <text evidence="1">Homodimer.</text>
</comment>
<comment type="subcellular location">
    <subcellularLocation>
        <location evidence="3">Cytoplasm</location>
    </subcellularLocation>
    <subcellularLocation>
        <location evidence="3">Nucleus</location>
    </subcellularLocation>
</comment>
<comment type="miscellaneous">
    <text evidence="4">Present with 21700 molecules/cell in log phase SD medium.</text>
</comment>
<comment type="similarity">
    <text evidence="10">Belongs to the zinc-containing alcohol dehydrogenase family.</text>
</comment>
<dbReference type="EC" id="1.1.1.2" evidence="1"/>
<dbReference type="EC" id="1.6.-.-" evidence="7"/>
<dbReference type="EMBL" id="Z54141">
    <property type="protein sequence ID" value="CAA90836.1"/>
    <property type="molecule type" value="Genomic_DNA"/>
</dbReference>
<dbReference type="EMBL" id="BK006946">
    <property type="protein sequence ID" value="DAA10220.1"/>
    <property type="molecule type" value="Genomic_DNA"/>
</dbReference>
<dbReference type="PIR" id="S59311">
    <property type="entry name" value="S59311"/>
</dbReference>
<dbReference type="RefSeq" id="NP_014051.3">
    <property type="nucleotide sequence ID" value="NM_001182831.3"/>
</dbReference>
<dbReference type="PDB" id="1PIW">
    <property type="method" value="X-ray"/>
    <property type="resolution" value="3.00 A"/>
    <property type="chains" value="A/B=1-360"/>
</dbReference>
<dbReference type="PDB" id="1PS0">
    <property type="method" value="X-ray"/>
    <property type="resolution" value="3.01 A"/>
    <property type="chains" value="A=1-360"/>
</dbReference>
<dbReference type="PDB" id="1Q1N">
    <property type="method" value="X-ray"/>
    <property type="resolution" value="3.15 A"/>
    <property type="chains" value="A=1-360"/>
</dbReference>
<dbReference type="PDBsum" id="1PIW"/>
<dbReference type="PDBsum" id="1PS0"/>
<dbReference type="PDBsum" id="1Q1N"/>
<dbReference type="SMR" id="Q04894"/>
<dbReference type="BioGRID" id="35498">
    <property type="interactions" value="96"/>
</dbReference>
<dbReference type="DIP" id="DIP-6308N"/>
<dbReference type="FunCoup" id="Q04894">
    <property type="interactions" value="731"/>
</dbReference>
<dbReference type="IntAct" id="Q04894">
    <property type="interactions" value="6"/>
</dbReference>
<dbReference type="STRING" id="4932.YMR318C"/>
<dbReference type="iPTMnet" id="Q04894"/>
<dbReference type="PaxDb" id="4932-YMR318C"/>
<dbReference type="PeptideAtlas" id="Q04894"/>
<dbReference type="EnsemblFungi" id="YMR318C_mRNA">
    <property type="protein sequence ID" value="YMR318C"/>
    <property type="gene ID" value="YMR318C"/>
</dbReference>
<dbReference type="GeneID" id="855368"/>
<dbReference type="KEGG" id="sce:YMR318C"/>
<dbReference type="AGR" id="SGD:S000004937"/>
<dbReference type="SGD" id="S000004937">
    <property type="gene designation" value="ADH6"/>
</dbReference>
<dbReference type="VEuPathDB" id="FungiDB:YMR318C"/>
<dbReference type="eggNOG" id="KOG0023">
    <property type="taxonomic scope" value="Eukaryota"/>
</dbReference>
<dbReference type="GeneTree" id="ENSGT00940000176642"/>
<dbReference type="HOGENOM" id="CLU_026673_20_2_1"/>
<dbReference type="InParanoid" id="Q04894"/>
<dbReference type="OMA" id="GWGEQKF"/>
<dbReference type="OrthoDB" id="1879366at2759"/>
<dbReference type="BioCyc" id="YEAST:YMR318C-MONOMER"/>
<dbReference type="SABIO-RK" id="Q04894"/>
<dbReference type="BioGRID-ORCS" id="855368">
    <property type="hits" value="8 hits in 10 CRISPR screens"/>
</dbReference>
<dbReference type="EvolutionaryTrace" id="Q04894"/>
<dbReference type="PRO" id="PR:Q04894"/>
<dbReference type="Proteomes" id="UP000002311">
    <property type="component" value="Chromosome XIII"/>
</dbReference>
<dbReference type="RNAct" id="Q04894">
    <property type="molecule type" value="protein"/>
</dbReference>
<dbReference type="GO" id="GO:0005737">
    <property type="term" value="C:cytoplasm"/>
    <property type="evidence" value="ECO:0007669"/>
    <property type="project" value="UniProtKB-SubCell"/>
</dbReference>
<dbReference type="GO" id="GO:0005634">
    <property type="term" value="C:nucleus"/>
    <property type="evidence" value="ECO:0007669"/>
    <property type="project" value="UniProtKB-SubCell"/>
</dbReference>
<dbReference type="GO" id="GO:0052675">
    <property type="term" value="F:3-methylbutanal reductase (NADPH) activity"/>
    <property type="evidence" value="ECO:0007669"/>
    <property type="project" value="RHEA"/>
</dbReference>
<dbReference type="GO" id="GO:0008106">
    <property type="term" value="F:alcohol dehydrogenase (NADP+) activity"/>
    <property type="evidence" value="ECO:0000314"/>
    <property type="project" value="SGD"/>
</dbReference>
<dbReference type="GO" id="GO:0045551">
    <property type="term" value="F:cinnamyl-alcohol dehydrogenase activity"/>
    <property type="evidence" value="ECO:0007669"/>
    <property type="project" value="RHEA"/>
</dbReference>
<dbReference type="GO" id="GO:0033833">
    <property type="term" value="F:hydroxymethylfurfural reductase (NADH) activity"/>
    <property type="evidence" value="ECO:0000315"/>
    <property type="project" value="SGD"/>
</dbReference>
<dbReference type="GO" id="GO:0033845">
    <property type="term" value="F:hydroxymethylfurfural reductase (NADPH) activity"/>
    <property type="evidence" value="ECO:0000315"/>
    <property type="project" value="SGD"/>
</dbReference>
<dbReference type="GO" id="GO:0008270">
    <property type="term" value="F:zinc ion binding"/>
    <property type="evidence" value="ECO:0007669"/>
    <property type="project" value="InterPro"/>
</dbReference>
<dbReference type="GO" id="GO:0006066">
    <property type="term" value="P:alcohol metabolic process"/>
    <property type="evidence" value="ECO:0000314"/>
    <property type="project" value="SGD"/>
</dbReference>
<dbReference type="GO" id="GO:0006081">
    <property type="term" value="P:aldehyde metabolic process"/>
    <property type="evidence" value="ECO:0000314"/>
    <property type="project" value="SGD"/>
</dbReference>
<dbReference type="GO" id="GO:0033859">
    <property type="term" value="P:furaldehyde metabolic process"/>
    <property type="evidence" value="ECO:0000315"/>
    <property type="project" value="SGD"/>
</dbReference>
<dbReference type="CDD" id="cd05283">
    <property type="entry name" value="CAD1"/>
    <property type="match status" value="1"/>
</dbReference>
<dbReference type="FunFam" id="3.40.50.720:FF:000158">
    <property type="entry name" value="Zinc-binding alcohol dehydrogenase"/>
    <property type="match status" value="1"/>
</dbReference>
<dbReference type="Gene3D" id="3.90.180.10">
    <property type="entry name" value="Medium-chain alcohol dehydrogenases, catalytic domain"/>
    <property type="match status" value="1"/>
</dbReference>
<dbReference type="Gene3D" id="3.40.50.720">
    <property type="entry name" value="NAD(P)-binding Rossmann-like Domain"/>
    <property type="match status" value="1"/>
</dbReference>
<dbReference type="InterPro" id="IPR013149">
    <property type="entry name" value="ADH-like_C"/>
</dbReference>
<dbReference type="InterPro" id="IPR013154">
    <property type="entry name" value="ADH-like_N"/>
</dbReference>
<dbReference type="InterPro" id="IPR002328">
    <property type="entry name" value="ADH_Zn_CS"/>
</dbReference>
<dbReference type="InterPro" id="IPR047109">
    <property type="entry name" value="CAD-like"/>
</dbReference>
<dbReference type="InterPro" id="IPR011032">
    <property type="entry name" value="GroES-like_sf"/>
</dbReference>
<dbReference type="InterPro" id="IPR036291">
    <property type="entry name" value="NAD(P)-bd_dom_sf"/>
</dbReference>
<dbReference type="PANTHER" id="PTHR42683">
    <property type="entry name" value="ALDEHYDE REDUCTASE"/>
    <property type="match status" value="1"/>
</dbReference>
<dbReference type="Pfam" id="PF08240">
    <property type="entry name" value="ADH_N"/>
    <property type="match status" value="1"/>
</dbReference>
<dbReference type="Pfam" id="PF00107">
    <property type="entry name" value="ADH_zinc_N"/>
    <property type="match status" value="1"/>
</dbReference>
<dbReference type="SUPFAM" id="SSF50129">
    <property type="entry name" value="GroES-like"/>
    <property type="match status" value="1"/>
</dbReference>
<dbReference type="SUPFAM" id="SSF51735">
    <property type="entry name" value="NAD(P)-binding Rossmann-fold domains"/>
    <property type="match status" value="1"/>
</dbReference>
<dbReference type="PROSITE" id="PS00059">
    <property type="entry name" value="ADH_ZINC"/>
    <property type="match status" value="1"/>
</dbReference>
<evidence type="ECO:0000269" key="1">
    <source>
    </source>
</evidence>
<evidence type="ECO:0000269" key="2">
    <source>
    </source>
</evidence>
<evidence type="ECO:0000269" key="3">
    <source>
    </source>
</evidence>
<evidence type="ECO:0000269" key="4">
    <source>
    </source>
</evidence>
<evidence type="ECO:0000269" key="5">
    <source>
    </source>
</evidence>
<evidence type="ECO:0000269" key="6">
    <source>
    </source>
</evidence>
<evidence type="ECO:0000269" key="7">
    <source>
    </source>
</evidence>
<evidence type="ECO:0000303" key="8">
    <source>
    </source>
</evidence>
<evidence type="ECO:0000303" key="9">
    <source>
    </source>
</evidence>
<evidence type="ECO:0000305" key="10"/>
<evidence type="ECO:0000305" key="11">
    <source>
    </source>
</evidence>
<evidence type="ECO:0000312" key="12">
    <source>
        <dbReference type="SGD" id="S000004937"/>
    </source>
</evidence>
<evidence type="ECO:0007744" key="13">
    <source>
        <dbReference type="PDB" id="1PIW"/>
    </source>
</evidence>
<evidence type="ECO:0007744" key="14">
    <source>
        <dbReference type="PDB" id="1PS0"/>
    </source>
</evidence>
<evidence type="ECO:0007744" key="15">
    <source>
        <dbReference type="PDB" id="1Q1N"/>
    </source>
</evidence>
<evidence type="ECO:0007744" key="16">
    <source>
    </source>
</evidence>
<evidence type="ECO:0007744" key="17">
    <source>
    </source>
</evidence>
<evidence type="ECO:0007829" key="18">
    <source>
        <dbReference type="PDB" id="1PIW"/>
    </source>
</evidence>
<evidence type="ECO:0007829" key="19">
    <source>
        <dbReference type="PDB" id="1PS0"/>
    </source>
</evidence>
<evidence type="ECO:0007829" key="20">
    <source>
        <dbReference type="PDB" id="1Q1N"/>
    </source>
</evidence>
<reference key="1">
    <citation type="journal article" date="1997" name="Nature">
        <title>The nucleotide sequence of Saccharomyces cerevisiae chromosome XIII.</title>
        <authorList>
            <person name="Bowman S."/>
            <person name="Churcher C.M."/>
            <person name="Badcock K."/>
            <person name="Brown D."/>
            <person name="Chillingworth T."/>
            <person name="Connor R."/>
            <person name="Dedman K."/>
            <person name="Devlin K."/>
            <person name="Gentles S."/>
            <person name="Hamlin N."/>
            <person name="Hunt S."/>
            <person name="Jagels K."/>
            <person name="Lye G."/>
            <person name="Moule S."/>
            <person name="Odell C."/>
            <person name="Pearson D."/>
            <person name="Rajandream M.A."/>
            <person name="Rice P."/>
            <person name="Skelton J."/>
            <person name="Walsh S.V."/>
            <person name="Whitehead S."/>
            <person name="Barrell B.G."/>
        </authorList>
    </citation>
    <scope>NUCLEOTIDE SEQUENCE [LARGE SCALE GENOMIC DNA]</scope>
    <source>
        <strain>ATCC 204508 / S288c</strain>
    </source>
</reference>
<reference key="2">
    <citation type="journal article" date="2014" name="G3 (Bethesda)">
        <title>The reference genome sequence of Saccharomyces cerevisiae: Then and now.</title>
        <authorList>
            <person name="Engel S.R."/>
            <person name="Dietrich F.S."/>
            <person name="Fisk D.G."/>
            <person name="Binkley G."/>
            <person name="Balakrishnan R."/>
            <person name="Costanzo M.C."/>
            <person name="Dwight S.S."/>
            <person name="Hitz B.C."/>
            <person name="Karra K."/>
            <person name="Nash R.S."/>
            <person name="Weng S."/>
            <person name="Wong E.D."/>
            <person name="Lloyd P."/>
            <person name="Skrzypek M.S."/>
            <person name="Miyasato S.R."/>
            <person name="Simison M."/>
            <person name="Cherry J.M."/>
        </authorList>
    </citation>
    <scope>GENOME REANNOTATION</scope>
    <source>
        <strain>ATCC 204508 / S288c</strain>
    </source>
</reference>
<reference key="3">
    <citation type="journal article" date="2002" name="Biochem. J.">
        <title>Characterization of the Saccharomyces cerevisiae YMR318C (ADH6) gene product as a broad specificity NADPH-dependent alcohol dehydrogenase: relevance in aldehyde reduction.</title>
        <authorList>
            <person name="Larroy C."/>
            <person name="Fernandez M.R."/>
            <person name="Gonzalez E."/>
            <person name="Pares X."/>
            <person name="Biosca J.A."/>
        </authorList>
    </citation>
    <scope>FUNCTION</scope>
    <scope>CATALYTIC ACTIVITY</scope>
    <scope>SUBUNIT</scope>
</reference>
<reference key="4">
    <citation type="journal article" date="2003" name="Chem. Biol. Interact.">
        <title>Properties and functional significance of Saccharomyces cerevisiae ADHVI.</title>
        <authorList>
            <person name="Larroy C."/>
            <person name="Rosario Fernandez M."/>
            <person name="Gonzalez E."/>
            <person name="Pares X."/>
            <person name="Biosca J.A."/>
        </authorList>
    </citation>
    <scope>FUNCTION</scope>
</reference>
<reference key="5">
    <citation type="journal article" date="2003" name="Acta Crystallogr. D">
        <title>Crystallization and preliminary X-ray analysis of NADP(H)-dependent alcohol dehydrogenases from Saccharomyces cerevisiae and Rana perezi.</title>
        <authorList>
            <person name="Valencia E."/>
            <person name="Rosell A."/>
            <person name="Larroy C."/>
            <person name="Farres J."/>
            <person name="Biosca J.A."/>
            <person name="Fita I."/>
            <person name="Pares X."/>
            <person name="Ochoa W.F."/>
        </authorList>
    </citation>
    <scope>CRYSTALLIZATION</scope>
</reference>
<reference key="6">
    <citation type="journal article" date="2003" name="Nature">
        <title>Global analysis of protein localization in budding yeast.</title>
        <authorList>
            <person name="Huh W.-K."/>
            <person name="Falvo J.V."/>
            <person name="Gerke L.C."/>
            <person name="Carroll A.S."/>
            <person name="Howson R.W."/>
            <person name="Weissman J.S."/>
            <person name="O'Shea E.K."/>
        </authorList>
    </citation>
    <scope>SUBCELLULAR LOCATION [LARGE SCALE ANALYSIS]</scope>
</reference>
<reference key="7">
    <citation type="journal article" date="2003" name="Nature">
        <title>Global analysis of protein expression in yeast.</title>
        <authorList>
            <person name="Ghaemmaghami S."/>
            <person name="Huh W.-K."/>
            <person name="Bower K."/>
            <person name="Howson R.W."/>
            <person name="Belle A."/>
            <person name="Dephoure N."/>
            <person name="O'Shea E.K."/>
            <person name="Weissman J.S."/>
        </authorList>
    </citation>
    <scope>LEVEL OF PROTEIN EXPRESSION [LARGE SCALE ANALYSIS]</scope>
</reference>
<reference key="8">
    <citation type="journal article" date="2006" name="Yeast">
        <title>A 5-hydroxymethyl furfural reducing enzyme encoded by the Saccharomyces cerevisiae ADH6 gene conveys HMF tolerance.</title>
        <authorList>
            <person name="Petersson A."/>
            <person name="Almeida J.R."/>
            <person name="Modig T."/>
            <person name="Karhumaa K."/>
            <person name="Hahn-Haegerdal B."/>
            <person name="Gorwa-Grauslund M.F."/>
            <person name="Liden G."/>
        </authorList>
    </citation>
    <scope>FUNCTION</scope>
</reference>
<reference key="9">
    <citation type="journal article" date="2008" name="Mol. Cell. Proteomics">
        <title>A multidimensional chromatography technology for in-depth phosphoproteome analysis.</title>
        <authorList>
            <person name="Albuquerque C.P."/>
            <person name="Smolka M.B."/>
            <person name="Payne S.H."/>
            <person name="Bafna V."/>
            <person name="Eng J."/>
            <person name="Zhou H."/>
        </authorList>
    </citation>
    <scope>PHOSPHORYLATION [LARGE SCALE ANALYSIS] AT SER-131 AND SER-359</scope>
    <scope>IDENTIFICATION BY MASS SPECTROMETRY [LARGE SCALE ANALYSIS]</scope>
</reference>
<reference key="10">
    <citation type="journal article" date="2009" name="Science">
        <title>Global analysis of Cdk1 substrate phosphorylation sites provides insights into evolution.</title>
        <authorList>
            <person name="Holt L.J."/>
            <person name="Tuch B.B."/>
            <person name="Villen J."/>
            <person name="Johnson A.D."/>
            <person name="Gygi S.P."/>
            <person name="Morgan D.O."/>
        </authorList>
    </citation>
    <scope>PHOSPHORYLATION [LARGE SCALE ANALYSIS] AT SER-359</scope>
    <scope>IDENTIFICATION BY MASS SPECTROMETRY [LARGE SCALE ANALYSIS]</scope>
</reference>
<reference key="11">
    <citation type="journal article" date="2014" name="Proc. Natl. Acad. Sci. U.S.A.">
        <title>Identification of S-nitroso-CoA reductases that regulate protein S-nitrosylation.</title>
        <authorList>
            <person name="Anand P."/>
            <person name="Hausladen A."/>
            <person name="Wang Y.J."/>
            <person name="Zhang G.F."/>
            <person name="Stomberski C."/>
            <person name="Brunengraber H."/>
            <person name="Hess D.T."/>
            <person name="Stamler J.S."/>
        </authorList>
    </citation>
    <scope>FUNCTION</scope>
    <scope>CATALYTIC ACTIVITY</scope>
    <scope>BIOPHYSICOCHEMICAL PROPERTIES</scope>
</reference>
<reference evidence="13 14 15" key="12">
    <citation type="journal article" date="2004" name="J. Mol. Biol.">
        <title>Apo and Holo structures of an NADPH-dependent cinnamyl alcohol dehydrogenase from Saccharomyces cerevisiae.</title>
        <authorList>
            <person name="Valencia E."/>
            <person name="Larroy C."/>
            <person name="Ochoa W.F."/>
            <person name="Pares X."/>
            <person name="Fita I."/>
            <person name="Biosca J.A."/>
        </authorList>
    </citation>
    <scope>X-RAY CRYSTALLOGRAPHY (3.00 ANGSTROMS) IN COMPLEX WITH NADP(+) AND ZN(2+)</scope>
</reference>
<protein>
    <recommendedName>
        <fullName evidence="10">NADP-dependent alcohol dehydrogenase 6</fullName>
        <ecNumber evidence="1">1.1.1.2</ecNumber>
    </recommendedName>
    <alternativeName>
        <fullName>NADP-dependent alcohol dehydrogenase VI</fullName>
    </alternativeName>
    <alternativeName>
        <fullName evidence="9">S-nitroso-CoA reductase</fullName>
        <shortName evidence="10">ScorR</shortName>
        <ecNumber evidence="7">1.6.-.-</ecNumber>
    </alternativeName>
    <alternativeName>
        <fullName evidence="8">ScADHVI</fullName>
    </alternativeName>
</protein>
<accession>Q04894</accession>
<accession>D6W0E6</accession>
<proteinExistence type="evidence at protein level"/>
<organism>
    <name type="scientific">Saccharomyces cerevisiae (strain ATCC 204508 / S288c)</name>
    <name type="common">Baker's yeast</name>
    <dbReference type="NCBI Taxonomy" id="559292"/>
    <lineage>
        <taxon>Eukaryota</taxon>
        <taxon>Fungi</taxon>
        <taxon>Dikarya</taxon>
        <taxon>Ascomycota</taxon>
        <taxon>Saccharomycotina</taxon>
        <taxon>Saccharomycetes</taxon>
        <taxon>Saccharomycetales</taxon>
        <taxon>Saccharomycetaceae</taxon>
        <taxon>Saccharomyces</taxon>
    </lineage>
</organism>
<sequence>MSYPEKFEGIAIQSHEDWKNPKKTKYDPKPFYDHDIDIKIEACGVCGSDIHCAAGHWGNMKMPLVVGHEIVGKVVKLGPKSNSGLKVGQRVGVGAQVFSCLECDRCKNDNEPYCTKFVTTYSQPYEDGYVSQGGYANYVRVHEHFVVPIPENIPSHLAAPLLCGGLTVYSPLVRNGCGPGKKVGIVGLGGIGSMGTLISKAMGAETYVISRSSRKREDAMKMGADHYIATLEEGDWGEKYFDTFDLIVVCASSLTDIDFNIMPKAMKVGGRIVSISIPEQHEMLSLKPYGLKAVSISYSALGSIKELNQLLKLVSEKDIKIWVETLPVGEAGVHEAFERMEKGDVRYRFTLVGYDKEFSD</sequence>
<feature type="chain" id="PRO_0000160734" description="NADP-dependent alcohol dehydrogenase 6">
    <location>
        <begin position="1"/>
        <end position="360"/>
    </location>
</feature>
<feature type="binding site" evidence="5 13 15">
    <location>
        <position position="46"/>
    </location>
    <ligand>
        <name>Zn(2+)</name>
        <dbReference type="ChEBI" id="CHEBI:29105"/>
        <label>1</label>
        <note>catalytic</note>
    </ligand>
</feature>
<feature type="binding site" evidence="5 13 14">
    <location>
        <position position="47"/>
    </location>
    <ligand>
        <name>NADP(+)</name>
        <dbReference type="ChEBI" id="CHEBI:58349"/>
    </ligand>
</feature>
<feature type="binding site" evidence="5 13">
    <location>
        <position position="51"/>
    </location>
    <ligand>
        <name>NADP(+)</name>
        <dbReference type="ChEBI" id="CHEBI:58349"/>
    </ligand>
</feature>
<feature type="binding site" evidence="5 13 15">
    <location>
        <position position="68"/>
    </location>
    <ligand>
        <name>Zn(2+)</name>
        <dbReference type="ChEBI" id="CHEBI:29105"/>
        <label>1</label>
        <note>catalytic</note>
    </ligand>
</feature>
<feature type="binding site" evidence="5 13 14 15">
    <location>
        <position position="100"/>
    </location>
    <ligand>
        <name>Zn(2+)</name>
        <dbReference type="ChEBI" id="CHEBI:29105"/>
        <label>2</label>
    </ligand>
</feature>
<feature type="binding site" evidence="5 13 14 15">
    <location>
        <position position="103"/>
    </location>
    <ligand>
        <name>Zn(2+)</name>
        <dbReference type="ChEBI" id="CHEBI:29105"/>
        <label>2</label>
    </ligand>
</feature>
<feature type="binding site" evidence="5 13 14 15">
    <location>
        <position position="106"/>
    </location>
    <ligand>
        <name>Zn(2+)</name>
        <dbReference type="ChEBI" id="CHEBI:29105"/>
        <label>2</label>
    </ligand>
</feature>
<feature type="binding site" evidence="5 13 14 15">
    <location>
        <position position="114"/>
    </location>
    <ligand>
        <name>Zn(2+)</name>
        <dbReference type="ChEBI" id="CHEBI:29105"/>
        <label>2</label>
    </ligand>
</feature>
<feature type="binding site" evidence="5 13 15">
    <location>
        <position position="163"/>
    </location>
    <ligand>
        <name>Zn(2+)</name>
        <dbReference type="ChEBI" id="CHEBI:29105"/>
        <label>1</label>
        <note>catalytic</note>
    </ligand>
</feature>
<feature type="binding site" evidence="5 13">
    <location>
        <position position="188"/>
    </location>
    <ligand>
        <name>NADP(+)</name>
        <dbReference type="ChEBI" id="CHEBI:58349"/>
    </ligand>
</feature>
<feature type="binding site" evidence="5 13 14">
    <location>
        <position position="190"/>
    </location>
    <ligand>
        <name>NADP(+)</name>
        <dbReference type="ChEBI" id="CHEBI:58349"/>
    </ligand>
</feature>
<feature type="binding site" evidence="5 13 14">
    <location>
        <position position="191"/>
    </location>
    <ligand>
        <name>NADP(+)</name>
        <dbReference type="ChEBI" id="CHEBI:58349"/>
    </ligand>
</feature>
<feature type="binding site" evidence="5 13 14">
    <location>
        <position position="210"/>
    </location>
    <ligand>
        <name>NADP(+)</name>
        <dbReference type="ChEBI" id="CHEBI:58349"/>
    </ligand>
</feature>
<feature type="binding site" evidence="5 13 14">
    <location>
        <position position="211"/>
    </location>
    <ligand>
        <name>NADP(+)</name>
        <dbReference type="ChEBI" id="CHEBI:58349"/>
    </ligand>
</feature>
<feature type="binding site" evidence="5 13 14">
    <location>
        <position position="215"/>
    </location>
    <ligand>
        <name>NADP(+)</name>
        <dbReference type="ChEBI" id="CHEBI:58349"/>
    </ligand>
</feature>
<feature type="binding site" evidence="5 13">
    <location>
        <position position="250"/>
    </location>
    <ligand>
        <name>NADP(+)</name>
        <dbReference type="ChEBI" id="CHEBI:58349"/>
    </ligand>
</feature>
<feature type="binding site" evidence="5 13 14">
    <location>
        <position position="252"/>
    </location>
    <ligand>
        <name>NADP(+)</name>
        <dbReference type="ChEBI" id="CHEBI:58349"/>
    </ligand>
</feature>
<feature type="binding site" evidence="5 13 14">
    <location>
        <position position="255"/>
    </location>
    <ligand>
        <name>NADP(+)</name>
        <dbReference type="ChEBI" id="CHEBI:58349"/>
    </ligand>
</feature>
<feature type="binding site" evidence="5 14">
    <location>
        <position position="256"/>
    </location>
    <ligand>
        <name>NADP(+)</name>
        <dbReference type="ChEBI" id="CHEBI:58349"/>
    </ligand>
</feature>
<feature type="binding site" evidence="5 14">
    <location>
        <position position="275"/>
    </location>
    <ligand>
        <name>NADP(+)</name>
        <dbReference type="ChEBI" id="CHEBI:58349"/>
    </ligand>
</feature>
<feature type="binding site" evidence="5 13 14">
    <location>
        <position position="277"/>
    </location>
    <ligand>
        <name>NADP(+)</name>
        <dbReference type="ChEBI" id="CHEBI:58349"/>
    </ligand>
</feature>
<feature type="binding site" evidence="5 13">
    <location>
        <position position="298"/>
    </location>
    <ligand>
        <name>NADP(+)</name>
        <dbReference type="ChEBI" id="CHEBI:58349"/>
    </ligand>
</feature>
<feature type="binding site" evidence="5 13 14">
    <location>
        <position position="299"/>
    </location>
    <ligand>
        <name>NADP(+)</name>
        <dbReference type="ChEBI" id="CHEBI:58349"/>
    </ligand>
</feature>
<feature type="binding site" evidence="5 13 14">
    <location>
        <position position="301"/>
    </location>
    <ligand>
        <name>NADP(+)</name>
        <dbReference type="ChEBI" id="CHEBI:58349"/>
    </ligand>
</feature>
<feature type="binding site" evidence="5 13">
    <location>
        <position position="348"/>
    </location>
    <ligand>
        <name>NADP(+)</name>
        <dbReference type="ChEBI" id="CHEBI:58349"/>
    </ligand>
</feature>
<feature type="modified residue" description="Phosphoserine" evidence="16">
    <location>
        <position position="131"/>
    </location>
</feature>
<feature type="modified residue" description="Phosphoserine" evidence="16 17">
    <location>
        <position position="359"/>
    </location>
</feature>
<feature type="turn" evidence="18">
    <location>
        <begin position="3"/>
        <end position="5"/>
    </location>
</feature>
<feature type="strand" evidence="18">
    <location>
        <begin position="7"/>
        <end position="12"/>
    </location>
</feature>
<feature type="strand" evidence="18">
    <location>
        <begin position="15"/>
        <end position="17"/>
    </location>
</feature>
<feature type="strand" evidence="18">
    <location>
        <begin position="22"/>
        <end position="26"/>
    </location>
</feature>
<feature type="strand" evidence="18">
    <location>
        <begin position="35"/>
        <end position="45"/>
    </location>
</feature>
<feature type="helix" evidence="18">
    <location>
        <begin position="47"/>
        <end position="53"/>
    </location>
</feature>
<feature type="turn" evidence="18">
    <location>
        <begin position="54"/>
        <end position="57"/>
    </location>
</feature>
<feature type="strand" evidence="18">
    <location>
        <begin position="62"/>
        <end position="64"/>
    </location>
</feature>
<feature type="strand" evidence="18">
    <location>
        <begin position="70"/>
        <end position="77"/>
    </location>
</feature>
<feature type="strand" evidence="18">
    <location>
        <begin position="90"/>
        <end position="93"/>
    </location>
</feature>
<feature type="strand" evidence="18">
    <location>
        <begin position="95"/>
        <end position="98"/>
    </location>
</feature>
<feature type="strand" evidence="20">
    <location>
        <begin position="101"/>
        <end position="103"/>
    </location>
</feature>
<feature type="helix" evidence="18">
    <location>
        <begin position="104"/>
        <end position="107"/>
    </location>
</feature>
<feature type="helix" evidence="18">
    <location>
        <begin position="111"/>
        <end position="113"/>
    </location>
</feature>
<feature type="strand" evidence="18">
    <location>
        <begin position="118"/>
        <end position="122"/>
    </location>
</feature>
<feature type="strand" evidence="18">
    <location>
        <begin position="134"/>
        <end position="142"/>
    </location>
</feature>
<feature type="helix" evidence="18">
    <location>
        <begin position="143"/>
        <end position="145"/>
    </location>
</feature>
<feature type="strand" evidence="18">
    <location>
        <begin position="146"/>
        <end position="148"/>
    </location>
</feature>
<feature type="helix" evidence="18">
    <location>
        <begin position="155"/>
        <end position="158"/>
    </location>
</feature>
<feature type="helix" evidence="18">
    <location>
        <begin position="159"/>
        <end position="162"/>
    </location>
</feature>
<feature type="helix" evidence="18">
    <location>
        <begin position="164"/>
        <end position="174"/>
    </location>
</feature>
<feature type="strand" evidence="18">
    <location>
        <begin position="182"/>
        <end position="186"/>
    </location>
</feature>
<feature type="helix" evidence="18">
    <location>
        <begin position="190"/>
        <end position="202"/>
    </location>
</feature>
<feature type="strand" evidence="18">
    <location>
        <begin position="205"/>
        <end position="213"/>
    </location>
</feature>
<feature type="helix" evidence="18">
    <location>
        <begin position="216"/>
        <end position="221"/>
    </location>
</feature>
<feature type="strand" evidence="18">
    <location>
        <begin position="225"/>
        <end position="229"/>
    </location>
</feature>
<feature type="helix" evidence="18">
    <location>
        <begin position="230"/>
        <end position="232"/>
    </location>
</feature>
<feature type="helix" evidence="18">
    <location>
        <begin position="236"/>
        <end position="239"/>
    </location>
</feature>
<feature type="strand" evidence="18">
    <location>
        <begin position="244"/>
        <end position="249"/>
    </location>
</feature>
<feature type="strand" evidence="19">
    <location>
        <begin position="254"/>
        <end position="256"/>
    </location>
</feature>
<feature type="turn" evidence="18">
    <location>
        <begin position="259"/>
        <end position="261"/>
    </location>
</feature>
<feature type="helix" evidence="18">
    <location>
        <begin position="262"/>
        <end position="265"/>
    </location>
</feature>
<feature type="strand" evidence="18">
    <location>
        <begin position="266"/>
        <end position="274"/>
    </location>
</feature>
<feature type="strand" evidence="18">
    <location>
        <begin position="284"/>
        <end position="286"/>
    </location>
</feature>
<feature type="helix" evidence="18">
    <location>
        <begin position="288"/>
        <end position="290"/>
    </location>
</feature>
<feature type="strand" evidence="18">
    <location>
        <begin position="295"/>
        <end position="298"/>
    </location>
</feature>
<feature type="helix" evidence="18">
    <location>
        <begin position="304"/>
        <end position="316"/>
    </location>
</feature>
<feature type="strand" evidence="18">
    <location>
        <begin position="323"/>
        <end position="329"/>
    </location>
</feature>
<feature type="helix" evidence="18">
    <location>
        <begin position="330"/>
        <end position="342"/>
    </location>
</feature>
<feature type="strand" evidence="18">
    <location>
        <begin position="346"/>
        <end position="352"/>
    </location>
</feature>
<feature type="helix" evidence="18">
    <location>
        <begin position="355"/>
        <end position="358"/>
    </location>
</feature>
<gene>
    <name evidence="8 12" type="primary">ADH6</name>
    <name type="ordered locus">YMR318C</name>
    <name type="ORF">YM9924.10C</name>
</gene>
<keyword id="KW-0002">3D-structure</keyword>
<keyword id="KW-0963">Cytoplasm</keyword>
<keyword id="KW-0479">Metal-binding</keyword>
<keyword id="KW-0521">NADP</keyword>
<keyword id="KW-0539">Nucleus</keyword>
<keyword id="KW-0560">Oxidoreductase</keyword>
<keyword id="KW-0597">Phosphoprotein</keyword>
<keyword id="KW-1185">Reference proteome</keyword>
<keyword id="KW-0862">Zinc</keyword>
<name>ADH6_YEAST</name>